<name>RLMH_XANOP</name>
<reference key="1">
    <citation type="journal article" date="2008" name="BMC Genomics">
        <title>Genome sequence and rapid evolution of the rice pathogen Xanthomonas oryzae pv. oryzae PXO99A.</title>
        <authorList>
            <person name="Salzberg S.L."/>
            <person name="Sommer D.D."/>
            <person name="Schatz M.C."/>
            <person name="Phillippy A.M."/>
            <person name="Rabinowicz P.D."/>
            <person name="Tsuge S."/>
            <person name="Furutani A."/>
            <person name="Ochiai H."/>
            <person name="Delcher A.L."/>
            <person name="Kelley D."/>
            <person name="Madupu R."/>
            <person name="Puiu D."/>
            <person name="Radune D."/>
            <person name="Shumway M."/>
            <person name="Trapnell C."/>
            <person name="Aparna G."/>
            <person name="Jha G."/>
            <person name="Pandey A."/>
            <person name="Patil P.B."/>
            <person name="Ishihara H."/>
            <person name="Meyer D.F."/>
            <person name="Szurek B."/>
            <person name="Verdier V."/>
            <person name="Koebnik R."/>
            <person name="Dow J.M."/>
            <person name="Ryan R.P."/>
            <person name="Hirata H."/>
            <person name="Tsuyumu S."/>
            <person name="Won Lee S."/>
            <person name="Seo Y.-S."/>
            <person name="Sriariyanum M."/>
            <person name="Ronald P.C."/>
            <person name="Sonti R.V."/>
            <person name="Van Sluys M.-A."/>
            <person name="Leach J.E."/>
            <person name="White F.F."/>
            <person name="Bogdanove A.J."/>
        </authorList>
    </citation>
    <scope>NUCLEOTIDE SEQUENCE [LARGE SCALE GENOMIC DNA]</scope>
    <source>
        <strain>PXO99A</strain>
    </source>
</reference>
<gene>
    <name evidence="1" type="primary">rlmH</name>
    <name type="ordered locus">PXO_01881</name>
</gene>
<accession>B2SWG5</accession>
<proteinExistence type="inferred from homology"/>
<evidence type="ECO:0000255" key="1">
    <source>
        <dbReference type="HAMAP-Rule" id="MF_00658"/>
    </source>
</evidence>
<organism>
    <name type="scientific">Xanthomonas oryzae pv. oryzae (strain PXO99A)</name>
    <dbReference type="NCBI Taxonomy" id="360094"/>
    <lineage>
        <taxon>Bacteria</taxon>
        <taxon>Pseudomonadati</taxon>
        <taxon>Pseudomonadota</taxon>
        <taxon>Gammaproteobacteria</taxon>
        <taxon>Lysobacterales</taxon>
        <taxon>Lysobacteraceae</taxon>
        <taxon>Xanthomonas</taxon>
    </lineage>
</organism>
<protein>
    <recommendedName>
        <fullName evidence="1">Ribosomal RNA large subunit methyltransferase H</fullName>
        <ecNumber evidence="1">2.1.1.177</ecNumber>
    </recommendedName>
    <alternativeName>
        <fullName evidence="1">23S rRNA (pseudouridine1915-N3)-methyltransferase</fullName>
    </alternativeName>
    <alternativeName>
        <fullName evidence="1">23S rRNA m3Psi1915 methyltransferase</fullName>
    </alternativeName>
    <alternativeName>
        <fullName evidence="1">rRNA (pseudouridine-N3-)-methyltransferase RlmH</fullName>
    </alternativeName>
</protein>
<feature type="chain" id="PRO_0000366677" description="Ribosomal RNA large subunit methyltransferase H">
    <location>
        <begin position="1"/>
        <end position="156"/>
    </location>
</feature>
<feature type="binding site" evidence="1">
    <location>
        <position position="73"/>
    </location>
    <ligand>
        <name>S-adenosyl-L-methionine</name>
        <dbReference type="ChEBI" id="CHEBI:59789"/>
    </ligand>
</feature>
<feature type="binding site" evidence="1">
    <location>
        <position position="104"/>
    </location>
    <ligand>
        <name>S-adenosyl-L-methionine</name>
        <dbReference type="ChEBI" id="CHEBI:59789"/>
    </ligand>
</feature>
<feature type="binding site" evidence="1">
    <location>
        <begin position="123"/>
        <end position="128"/>
    </location>
    <ligand>
        <name>S-adenosyl-L-methionine</name>
        <dbReference type="ChEBI" id="CHEBI:59789"/>
    </ligand>
</feature>
<sequence>MKCRLIATGERAPSWVAQGFAEYQKRLSHWMPLELVEIEPGLRGKGRDAQRATDDEGRRVLAALPKNAYVVALDVPGRPLSSEQLAQRMEHWRGQGRDLALLIGGPEGHSAEVLKSASESWSIGPLTLPHMLVRLIVAEQLYRAAAMLANHPYHRA</sequence>
<keyword id="KW-0963">Cytoplasm</keyword>
<keyword id="KW-0489">Methyltransferase</keyword>
<keyword id="KW-0698">rRNA processing</keyword>
<keyword id="KW-0949">S-adenosyl-L-methionine</keyword>
<keyword id="KW-0808">Transferase</keyword>
<dbReference type="EC" id="2.1.1.177" evidence="1"/>
<dbReference type="EMBL" id="CP000967">
    <property type="protein sequence ID" value="ACD60176.1"/>
    <property type="molecule type" value="Genomic_DNA"/>
</dbReference>
<dbReference type="RefSeq" id="WP_011409102.1">
    <property type="nucleotide sequence ID" value="NC_010717.2"/>
</dbReference>
<dbReference type="SMR" id="B2SWG5"/>
<dbReference type="GeneID" id="77338166"/>
<dbReference type="KEGG" id="xop:PXO_01881"/>
<dbReference type="eggNOG" id="COG1576">
    <property type="taxonomic scope" value="Bacteria"/>
</dbReference>
<dbReference type="HOGENOM" id="CLU_100552_1_0_6"/>
<dbReference type="Proteomes" id="UP000001740">
    <property type="component" value="Chromosome"/>
</dbReference>
<dbReference type="GO" id="GO:0005737">
    <property type="term" value="C:cytoplasm"/>
    <property type="evidence" value="ECO:0007669"/>
    <property type="project" value="UniProtKB-SubCell"/>
</dbReference>
<dbReference type="GO" id="GO:0070038">
    <property type="term" value="F:rRNA (pseudouridine-N3-)-methyltransferase activity"/>
    <property type="evidence" value="ECO:0007669"/>
    <property type="project" value="UniProtKB-UniRule"/>
</dbReference>
<dbReference type="CDD" id="cd18081">
    <property type="entry name" value="RlmH-like"/>
    <property type="match status" value="1"/>
</dbReference>
<dbReference type="Gene3D" id="3.40.1280.10">
    <property type="match status" value="1"/>
</dbReference>
<dbReference type="HAMAP" id="MF_00658">
    <property type="entry name" value="23SrRNA_methyltr_H"/>
    <property type="match status" value="1"/>
</dbReference>
<dbReference type="InterPro" id="IPR029028">
    <property type="entry name" value="Alpha/beta_knot_MTases"/>
</dbReference>
<dbReference type="InterPro" id="IPR003742">
    <property type="entry name" value="RlmH-like"/>
</dbReference>
<dbReference type="InterPro" id="IPR029026">
    <property type="entry name" value="tRNA_m1G_MTases_N"/>
</dbReference>
<dbReference type="NCBIfam" id="NF000986">
    <property type="entry name" value="PRK00103.1-4"/>
    <property type="match status" value="1"/>
</dbReference>
<dbReference type="NCBIfam" id="TIGR00246">
    <property type="entry name" value="tRNA_RlmH_YbeA"/>
    <property type="match status" value="1"/>
</dbReference>
<dbReference type="PANTHER" id="PTHR33603">
    <property type="entry name" value="METHYLTRANSFERASE"/>
    <property type="match status" value="1"/>
</dbReference>
<dbReference type="PANTHER" id="PTHR33603:SF1">
    <property type="entry name" value="RIBOSOMAL RNA LARGE SUBUNIT METHYLTRANSFERASE H"/>
    <property type="match status" value="1"/>
</dbReference>
<dbReference type="Pfam" id="PF02590">
    <property type="entry name" value="SPOUT_MTase"/>
    <property type="match status" value="1"/>
</dbReference>
<dbReference type="PIRSF" id="PIRSF004505">
    <property type="entry name" value="MT_bac"/>
    <property type="match status" value="1"/>
</dbReference>
<dbReference type="SUPFAM" id="SSF75217">
    <property type="entry name" value="alpha/beta knot"/>
    <property type="match status" value="1"/>
</dbReference>
<comment type="function">
    <text evidence="1">Specifically methylates the pseudouridine at position 1915 (m3Psi1915) in 23S rRNA.</text>
</comment>
<comment type="catalytic activity">
    <reaction evidence="1">
        <text>pseudouridine(1915) in 23S rRNA + S-adenosyl-L-methionine = N(3)-methylpseudouridine(1915) in 23S rRNA + S-adenosyl-L-homocysteine + H(+)</text>
        <dbReference type="Rhea" id="RHEA:42752"/>
        <dbReference type="Rhea" id="RHEA-COMP:10221"/>
        <dbReference type="Rhea" id="RHEA-COMP:10222"/>
        <dbReference type="ChEBI" id="CHEBI:15378"/>
        <dbReference type="ChEBI" id="CHEBI:57856"/>
        <dbReference type="ChEBI" id="CHEBI:59789"/>
        <dbReference type="ChEBI" id="CHEBI:65314"/>
        <dbReference type="ChEBI" id="CHEBI:74486"/>
        <dbReference type="EC" id="2.1.1.177"/>
    </reaction>
</comment>
<comment type="subunit">
    <text evidence="1">Homodimer.</text>
</comment>
<comment type="subcellular location">
    <subcellularLocation>
        <location evidence="1">Cytoplasm</location>
    </subcellularLocation>
</comment>
<comment type="similarity">
    <text evidence="1">Belongs to the RNA methyltransferase RlmH family.</text>
</comment>